<name>RSMH_SINFN</name>
<dbReference type="EC" id="2.1.1.199" evidence="1"/>
<dbReference type="EMBL" id="CP001389">
    <property type="protein sequence ID" value="ACP25878.1"/>
    <property type="molecule type" value="Genomic_DNA"/>
</dbReference>
<dbReference type="RefSeq" id="WP_012708641.1">
    <property type="nucleotide sequence ID" value="NC_012587.1"/>
</dbReference>
<dbReference type="RefSeq" id="YP_002826631.1">
    <property type="nucleotide sequence ID" value="NC_012587.1"/>
</dbReference>
<dbReference type="SMR" id="C3MEN7"/>
<dbReference type="STRING" id="394.NGR_c21150"/>
<dbReference type="KEGG" id="rhi:NGR_c21150"/>
<dbReference type="PATRIC" id="fig|394.7.peg.4940"/>
<dbReference type="eggNOG" id="COG0275">
    <property type="taxonomic scope" value="Bacteria"/>
</dbReference>
<dbReference type="HOGENOM" id="CLU_038422_1_1_5"/>
<dbReference type="OrthoDB" id="9806637at2"/>
<dbReference type="Proteomes" id="UP000001054">
    <property type="component" value="Chromosome"/>
</dbReference>
<dbReference type="GO" id="GO:0005737">
    <property type="term" value="C:cytoplasm"/>
    <property type="evidence" value="ECO:0007669"/>
    <property type="project" value="UniProtKB-SubCell"/>
</dbReference>
<dbReference type="GO" id="GO:0071424">
    <property type="term" value="F:rRNA (cytosine-N4-)-methyltransferase activity"/>
    <property type="evidence" value="ECO:0007669"/>
    <property type="project" value="UniProtKB-UniRule"/>
</dbReference>
<dbReference type="GO" id="GO:0070475">
    <property type="term" value="P:rRNA base methylation"/>
    <property type="evidence" value="ECO:0007669"/>
    <property type="project" value="UniProtKB-UniRule"/>
</dbReference>
<dbReference type="CDD" id="cd02440">
    <property type="entry name" value="AdoMet_MTases"/>
    <property type="match status" value="1"/>
</dbReference>
<dbReference type="Gene3D" id="1.10.150.170">
    <property type="entry name" value="Putative methyltransferase TM0872, insert domain"/>
    <property type="match status" value="1"/>
</dbReference>
<dbReference type="Gene3D" id="3.40.50.150">
    <property type="entry name" value="Vaccinia Virus protein VP39"/>
    <property type="match status" value="1"/>
</dbReference>
<dbReference type="HAMAP" id="MF_01007">
    <property type="entry name" value="16SrRNA_methyltr_H"/>
    <property type="match status" value="1"/>
</dbReference>
<dbReference type="InterPro" id="IPR002903">
    <property type="entry name" value="RsmH"/>
</dbReference>
<dbReference type="InterPro" id="IPR023397">
    <property type="entry name" value="SAM-dep_MeTrfase_MraW_recog"/>
</dbReference>
<dbReference type="InterPro" id="IPR029063">
    <property type="entry name" value="SAM-dependent_MTases_sf"/>
</dbReference>
<dbReference type="NCBIfam" id="TIGR00006">
    <property type="entry name" value="16S rRNA (cytosine(1402)-N(4))-methyltransferase RsmH"/>
    <property type="match status" value="1"/>
</dbReference>
<dbReference type="PANTHER" id="PTHR11265:SF0">
    <property type="entry name" value="12S RRNA N4-METHYLCYTIDINE METHYLTRANSFERASE"/>
    <property type="match status" value="1"/>
</dbReference>
<dbReference type="PANTHER" id="PTHR11265">
    <property type="entry name" value="S-ADENOSYL-METHYLTRANSFERASE MRAW"/>
    <property type="match status" value="1"/>
</dbReference>
<dbReference type="Pfam" id="PF01795">
    <property type="entry name" value="Methyltransf_5"/>
    <property type="match status" value="1"/>
</dbReference>
<dbReference type="PIRSF" id="PIRSF004486">
    <property type="entry name" value="MraW"/>
    <property type="match status" value="1"/>
</dbReference>
<dbReference type="SUPFAM" id="SSF81799">
    <property type="entry name" value="Putative methyltransferase TM0872, insert domain"/>
    <property type="match status" value="1"/>
</dbReference>
<dbReference type="SUPFAM" id="SSF53335">
    <property type="entry name" value="S-adenosyl-L-methionine-dependent methyltransferases"/>
    <property type="match status" value="1"/>
</dbReference>
<keyword id="KW-0963">Cytoplasm</keyword>
<keyword id="KW-0489">Methyltransferase</keyword>
<keyword id="KW-1185">Reference proteome</keyword>
<keyword id="KW-0698">rRNA processing</keyword>
<keyword id="KW-0949">S-adenosyl-L-methionine</keyword>
<keyword id="KW-0808">Transferase</keyword>
<feature type="chain" id="PRO_0000387072" description="Ribosomal RNA small subunit methyltransferase H">
    <location>
        <begin position="1"/>
        <end position="341"/>
    </location>
</feature>
<feature type="region of interest" description="Disordered" evidence="2">
    <location>
        <begin position="292"/>
        <end position="318"/>
    </location>
</feature>
<feature type="binding site" evidence="1">
    <location>
        <begin position="47"/>
        <end position="49"/>
    </location>
    <ligand>
        <name>S-adenosyl-L-methionine</name>
        <dbReference type="ChEBI" id="CHEBI:59789"/>
    </ligand>
</feature>
<feature type="binding site" evidence="1">
    <location>
        <position position="64"/>
    </location>
    <ligand>
        <name>S-adenosyl-L-methionine</name>
        <dbReference type="ChEBI" id="CHEBI:59789"/>
    </ligand>
</feature>
<feature type="binding site" evidence="1">
    <location>
        <position position="91"/>
    </location>
    <ligand>
        <name>S-adenosyl-L-methionine</name>
        <dbReference type="ChEBI" id="CHEBI:59789"/>
    </ligand>
</feature>
<feature type="binding site" evidence="1">
    <location>
        <position position="109"/>
    </location>
    <ligand>
        <name>S-adenosyl-L-methionine</name>
        <dbReference type="ChEBI" id="CHEBI:59789"/>
    </ligand>
</feature>
<feature type="binding site" evidence="1">
    <location>
        <position position="116"/>
    </location>
    <ligand>
        <name>S-adenosyl-L-methionine</name>
        <dbReference type="ChEBI" id="CHEBI:59789"/>
    </ligand>
</feature>
<proteinExistence type="inferred from homology"/>
<gene>
    <name evidence="1" type="primary">rsmH</name>
    <name type="synonym">mraW</name>
    <name type="ordered locus">NGR_c21150</name>
</gene>
<reference key="1">
    <citation type="journal article" date="2009" name="Appl. Environ. Microbiol.">
        <title>Rhizobium sp. strain NGR234 possesses a remarkable number of secretion systems.</title>
        <authorList>
            <person name="Schmeisser C."/>
            <person name="Liesegang H."/>
            <person name="Krysciak D."/>
            <person name="Bakkou N."/>
            <person name="Le Quere A."/>
            <person name="Wollherr A."/>
            <person name="Heinemeyer I."/>
            <person name="Morgenstern B."/>
            <person name="Pommerening-Roeser A."/>
            <person name="Flores M."/>
            <person name="Palacios R."/>
            <person name="Brenner S."/>
            <person name="Gottschalk G."/>
            <person name="Schmitz R.A."/>
            <person name="Broughton W.J."/>
            <person name="Perret X."/>
            <person name="Strittmatter A.W."/>
            <person name="Streit W.R."/>
        </authorList>
    </citation>
    <scope>NUCLEOTIDE SEQUENCE [LARGE SCALE GENOMIC DNA]</scope>
    <source>
        <strain>NBRC 101917 / NGR234</strain>
    </source>
</reference>
<accession>C3MEN7</accession>
<evidence type="ECO:0000255" key="1">
    <source>
        <dbReference type="HAMAP-Rule" id="MF_01007"/>
    </source>
</evidence>
<evidence type="ECO:0000256" key="2">
    <source>
        <dbReference type="SAM" id="MobiDB-lite"/>
    </source>
</evidence>
<sequence>MVTDQGDRASEADGGPVRHIPVMLAEVLAALEPAPGKVILDGTFGAGGYTSAILDAGADVIALDRDPTAIAAGQPMVAAAGGRLRLIHSRFSELADHVPEGGLDGIVFDIGVSSMQIDEAERGFSFQKKGPLDMRMSAAGVSAADVVNRAKVSDLIRIFGFLGEEKQAGRIARAIEKRRAEAPFETTRNLANLIETVTPRKAKDKIHPATRVFQALRIFVNDELGELANALFAAERVLKPGGRLVVVTFHSLEDRIVKTFFQDRSGKAGGSRHLPLVTARDATFTPVGKPMVAASEDEASRNPRARSAKLRAGVRTPAASPGNDLSIFNLPELASLARLGG</sequence>
<comment type="function">
    <text evidence="1">Specifically methylates the N4 position of cytidine in position 1402 (C1402) of 16S rRNA.</text>
</comment>
<comment type="catalytic activity">
    <reaction evidence="1">
        <text>cytidine(1402) in 16S rRNA + S-adenosyl-L-methionine = N(4)-methylcytidine(1402) in 16S rRNA + S-adenosyl-L-homocysteine + H(+)</text>
        <dbReference type="Rhea" id="RHEA:42928"/>
        <dbReference type="Rhea" id="RHEA-COMP:10286"/>
        <dbReference type="Rhea" id="RHEA-COMP:10287"/>
        <dbReference type="ChEBI" id="CHEBI:15378"/>
        <dbReference type="ChEBI" id="CHEBI:57856"/>
        <dbReference type="ChEBI" id="CHEBI:59789"/>
        <dbReference type="ChEBI" id="CHEBI:74506"/>
        <dbReference type="ChEBI" id="CHEBI:82748"/>
        <dbReference type="EC" id="2.1.1.199"/>
    </reaction>
</comment>
<comment type="subcellular location">
    <subcellularLocation>
        <location evidence="1">Cytoplasm</location>
    </subcellularLocation>
</comment>
<comment type="similarity">
    <text evidence="1">Belongs to the methyltransferase superfamily. RsmH family.</text>
</comment>
<protein>
    <recommendedName>
        <fullName evidence="1">Ribosomal RNA small subunit methyltransferase H</fullName>
        <ecNumber evidence="1">2.1.1.199</ecNumber>
    </recommendedName>
    <alternativeName>
        <fullName evidence="1">16S rRNA m(4)C1402 methyltransferase</fullName>
    </alternativeName>
    <alternativeName>
        <fullName evidence="1">rRNA (cytosine-N(4)-)-methyltransferase RsmH</fullName>
    </alternativeName>
</protein>
<organism>
    <name type="scientific">Sinorhizobium fredii (strain NBRC 101917 / NGR234)</name>
    <dbReference type="NCBI Taxonomy" id="394"/>
    <lineage>
        <taxon>Bacteria</taxon>
        <taxon>Pseudomonadati</taxon>
        <taxon>Pseudomonadota</taxon>
        <taxon>Alphaproteobacteria</taxon>
        <taxon>Hyphomicrobiales</taxon>
        <taxon>Rhizobiaceae</taxon>
        <taxon>Sinorhizobium/Ensifer group</taxon>
        <taxon>Sinorhizobium</taxon>
    </lineage>
</organism>